<keyword id="KW-0238">DNA-binding</keyword>
<keyword id="KW-0413">Isomerase</keyword>
<keyword id="KW-0460">Magnesium</keyword>
<keyword id="KW-0479">Metal-binding</keyword>
<keyword id="KW-1185">Reference proteome</keyword>
<keyword id="KW-0677">Repeat</keyword>
<keyword id="KW-0799">Topoisomerase</keyword>
<keyword id="KW-0862">Zinc</keyword>
<keyword id="KW-0863">Zinc-finger</keyword>
<proteinExistence type="inferred from homology"/>
<evidence type="ECO:0000255" key="1">
    <source>
        <dbReference type="HAMAP-Rule" id="MF_00952"/>
    </source>
</evidence>
<evidence type="ECO:0000255" key="2">
    <source>
        <dbReference type="PROSITE-ProRule" id="PRU01383"/>
    </source>
</evidence>
<feature type="chain" id="PRO_0000145146" description="DNA topoisomerase 1">
    <location>
        <begin position="1"/>
        <end position="700"/>
    </location>
</feature>
<feature type="domain" description="Toprim" evidence="1">
    <location>
        <begin position="3"/>
        <end position="114"/>
    </location>
</feature>
<feature type="domain" description="Topo IA-type catalytic" evidence="2">
    <location>
        <begin position="130"/>
        <end position="553"/>
    </location>
</feature>
<feature type="zinc finger region" description="C4-type 1">
    <location>
        <begin position="573"/>
        <end position="599"/>
    </location>
</feature>
<feature type="zinc finger region" description="C4-type 2">
    <location>
        <begin position="629"/>
        <end position="656"/>
    </location>
</feature>
<feature type="zinc finger region" description="C4-type 3">
    <location>
        <begin position="669"/>
        <end position="692"/>
    </location>
</feature>
<feature type="region of interest" description="Interaction with DNA" evidence="1">
    <location>
        <begin position="164"/>
        <end position="169"/>
    </location>
</feature>
<feature type="active site" description="O-(5'-phospho-DNA)-tyrosine intermediate" evidence="2">
    <location>
        <position position="298"/>
    </location>
</feature>
<feature type="binding site" evidence="1">
    <location>
        <position position="9"/>
    </location>
    <ligand>
        <name>Mg(2+)</name>
        <dbReference type="ChEBI" id="CHEBI:18420"/>
        <note>catalytic</note>
    </ligand>
</feature>
<feature type="binding site" evidence="1">
    <location>
        <position position="83"/>
    </location>
    <ligand>
        <name>Mg(2+)</name>
        <dbReference type="ChEBI" id="CHEBI:18420"/>
        <note>catalytic</note>
    </ligand>
</feature>
<feature type="site" description="Interaction with DNA" evidence="1">
    <location>
        <position position="33"/>
    </location>
</feature>
<feature type="site" description="Interaction with DNA" evidence="1">
    <location>
        <position position="140"/>
    </location>
</feature>
<feature type="site" description="Interaction with DNA" evidence="1">
    <location>
        <position position="141"/>
    </location>
</feature>
<feature type="site" description="Interaction with DNA" evidence="1">
    <location>
        <position position="144"/>
    </location>
</feature>
<feature type="site" description="Interaction with DNA" evidence="1">
    <location>
        <position position="149"/>
    </location>
</feature>
<feature type="site" description="Interaction with DNA" evidence="1">
    <location>
        <position position="300"/>
    </location>
</feature>
<feature type="site" description="Interaction with DNA" evidence="1">
    <location>
        <position position="485"/>
    </location>
</feature>
<comment type="function">
    <text evidence="1">Releases the supercoiling and torsional tension of DNA, which is introduced during the DNA replication and transcription, by transiently cleaving and rejoining one strand of the DNA duplex. Introduces a single-strand break via transesterification at a target site in duplex DNA. The scissile phosphodiester is attacked by the catalytic tyrosine of the enzyme, resulting in the formation of a DNA-(5'-phosphotyrosyl)-enzyme intermediate and the expulsion of a 3'-OH DNA strand. The free DNA strand then undergoes passage around the unbroken strand, thus removing DNA supercoils. Finally, in the religation step, the DNA 3'-OH attacks the covalent intermediate to expel the active-site tyrosine and restore the DNA phosphodiester backbone.</text>
</comment>
<comment type="catalytic activity">
    <reaction evidence="1">
        <text>ATP-independent breakage of single-stranded DNA, followed by passage and rejoining.</text>
        <dbReference type="EC" id="5.6.2.1"/>
    </reaction>
</comment>
<comment type="cofactor">
    <cofactor evidence="1">
        <name>Mg(2+)</name>
        <dbReference type="ChEBI" id="CHEBI:18420"/>
    </cofactor>
</comment>
<comment type="subunit">
    <text evidence="1">Monomer.</text>
</comment>
<comment type="similarity">
    <text evidence="1">Belongs to the type IA topoisomerase family.</text>
</comment>
<sequence length="700" mass="79148">MKKNLIIVESPAKAKTIGNFLGKDYEVIASKGHIRDLPKSSFGIKIEDDEFIPEYRITSDHSALVKELKSKAKDAKEVYLATDEDREGEAIAYHIAKAIGKDENTLPRIVFHEITKSAIENALKNPRKLNMHSVNAQQTRRLLDRIVGYKLSPLLGQKIQRGLSAGRVQSAALKIIVDREKEIRAFVPLEYFSIDMIFQKDLDAELVEFDKAKIEKLTITNKDRAKLILEACKNEVYSISDIESKERKIAPPPPFMTSTLQQSASNRLGFNPKKTMMIAQKLYEGVNTHEGVMGVITYMRTDSLNLAKEAVENARKFIQANFGKDYLPSKANVYTTKTKGAQEAHEAIRPTNLSFTPEIAAKFLDKDELKLYTLIYNRFLACQMSPAISQTQNVFVKNDRVVFKISGRKILFDGYYKVYGDMDKDKILPNFKIGQNLKVQNLEMNSHFTEPPSRYSEAGLVKKLESLGIGRPSTYAPTISILTSRDYVTIDKKQLIPSDVAFNVTEVLEKNFSDIVDSKFTSNLENTLDEIAEDKADWQETLKEFYYPFMRKIEEGKTKIASQKTVTKLGESCPDCGGELAIRKGRFGEFVACLNFPKCKYSRNLKSESKNESENTAAKAKANGTGITCPSCQKGEIVERFSKRGKFYGCSAYPKCNFISKYKPSEEKCEECGETLVIKELKKGTFLECLKCKIKKEMKD</sequence>
<gene>
    <name evidence="1" type="primary">topA</name>
    <name type="ordered locus">Cj1686c</name>
</gene>
<reference key="1">
    <citation type="journal article" date="2000" name="Nature">
        <title>The genome sequence of the food-borne pathogen Campylobacter jejuni reveals hypervariable sequences.</title>
        <authorList>
            <person name="Parkhill J."/>
            <person name="Wren B.W."/>
            <person name="Mungall K.L."/>
            <person name="Ketley J.M."/>
            <person name="Churcher C.M."/>
            <person name="Basham D."/>
            <person name="Chillingworth T."/>
            <person name="Davies R.M."/>
            <person name="Feltwell T."/>
            <person name="Holroyd S."/>
            <person name="Jagels K."/>
            <person name="Karlyshev A.V."/>
            <person name="Moule S."/>
            <person name="Pallen M.J."/>
            <person name="Penn C.W."/>
            <person name="Quail M.A."/>
            <person name="Rajandream M.A."/>
            <person name="Rutherford K.M."/>
            <person name="van Vliet A.H.M."/>
            <person name="Whitehead S."/>
            <person name="Barrell B.G."/>
        </authorList>
    </citation>
    <scope>NUCLEOTIDE SEQUENCE [LARGE SCALE GENOMIC DNA]</scope>
    <source>
        <strain>ATCC 700819 / NCTC 11168</strain>
    </source>
</reference>
<protein>
    <recommendedName>
        <fullName evidence="1">DNA topoisomerase 1</fullName>
        <ecNumber evidence="1">5.6.2.1</ecNumber>
    </recommendedName>
    <alternativeName>
        <fullName evidence="1">DNA topoisomerase I</fullName>
    </alternativeName>
    <alternativeName>
        <fullName>Omega-protein</fullName>
    </alternativeName>
    <alternativeName>
        <fullName>Relaxing enzyme</fullName>
    </alternativeName>
    <alternativeName>
        <fullName>Swivelase</fullName>
    </alternativeName>
    <alternativeName>
        <fullName>Untwisting enzyme</fullName>
    </alternativeName>
</protein>
<organism>
    <name type="scientific">Campylobacter jejuni subsp. jejuni serotype O:2 (strain ATCC 700819 / NCTC 11168)</name>
    <dbReference type="NCBI Taxonomy" id="192222"/>
    <lineage>
        <taxon>Bacteria</taxon>
        <taxon>Pseudomonadati</taxon>
        <taxon>Campylobacterota</taxon>
        <taxon>Epsilonproteobacteria</taxon>
        <taxon>Campylobacterales</taxon>
        <taxon>Campylobacteraceae</taxon>
        <taxon>Campylobacter</taxon>
    </lineage>
</organism>
<dbReference type="EC" id="5.6.2.1" evidence="1"/>
<dbReference type="EMBL" id="AL111168">
    <property type="protein sequence ID" value="CAL35780.1"/>
    <property type="molecule type" value="Genomic_DNA"/>
</dbReference>
<dbReference type="PIR" id="B81266">
    <property type="entry name" value="B81266"/>
</dbReference>
<dbReference type="RefSeq" id="WP_002851268.1">
    <property type="nucleotide sequence ID" value="NZ_SZUC01000002.1"/>
</dbReference>
<dbReference type="RefSeq" id="YP_002345052.1">
    <property type="nucleotide sequence ID" value="NC_002163.1"/>
</dbReference>
<dbReference type="SMR" id="Q9PLZ2"/>
<dbReference type="STRING" id="192222.Cj1686c"/>
<dbReference type="PaxDb" id="192222-Cj1686c"/>
<dbReference type="EnsemblBacteria" id="CAL35780">
    <property type="protein sequence ID" value="CAL35780"/>
    <property type="gene ID" value="Cj1686c"/>
</dbReference>
<dbReference type="GeneID" id="905960"/>
<dbReference type="KEGG" id="cje:Cj1686c"/>
<dbReference type="PATRIC" id="fig|192222.6.peg.1660"/>
<dbReference type="eggNOG" id="COG0550">
    <property type="taxonomic scope" value="Bacteria"/>
</dbReference>
<dbReference type="HOGENOM" id="CLU_002929_4_3_7"/>
<dbReference type="OrthoDB" id="9804262at2"/>
<dbReference type="Proteomes" id="UP000000799">
    <property type="component" value="Chromosome"/>
</dbReference>
<dbReference type="GO" id="GO:0005694">
    <property type="term" value="C:chromosome"/>
    <property type="evidence" value="ECO:0007669"/>
    <property type="project" value="InterPro"/>
</dbReference>
<dbReference type="GO" id="GO:0003677">
    <property type="term" value="F:DNA binding"/>
    <property type="evidence" value="ECO:0007669"/>
    <property type="project" value="UniProtKB-KW"/>
</dbReference>
<dbReference type="GO" id="GO:0003917">
    <property type="term" value="F:DNA topoisomerase type I (single strand cut, ATP-independent) activity"/>
    <property type="evidence" value="ECO:0007669"/>
    <property type="project" value="UniProtKB-UniRule"/>
</dbReference>
<dbReference type="GO" id="GO:0008270">
    <property type="term" value="F:zinc ion binding"/>
    <property type="evidence" value="ECO:0007669"/>
    <property type="project" value="UniProtKB-KW"/>
</dbReference>
<dbReference type="GO" id="GO:0006265">
    <property type="term" value="P:DNA topological change"/>
    <property type="evidence" value="ECO:0007669"/>
    <property type="project" value="UniProtKB-UniRule"/>
</dbReference>
<dbReference type="CDD" id="cd00186">
    <property type="entry name" value="TOP1Ac"/>
    <property type="match status" value="1"/>
</dbReference>
<dbReference type="CDD" id="cd03363">
    <property type="entry name" value="TOPRIM_TopoIA_TopoI"/>
    <property type="match status" value="1"/>
</dbReference>
<dbReference type="Gene3D" id="3.40.50.140">
    <property type="match status" value="1"/>
</dbReference>
<dbReference type="Gene3D" id="3.30.65.10">
    <property type="entry name" value="Bacterial Topoisomerase I, domain 1"/>
    <property type="match status" value="2"/>
</dbReference>
<dbReference type="Gene3D" id="1.10.460.10">
    <property type="entry name" value="Topoisomerase I, domain 2"/>
    <property type="match status" value="1"/>
</dbReference>
<dbReference type="Gene3D" id="2.70.20.10">
    <property type="entry name" value="Topoisomerase I, domain 3"/>
    <property type="match status" value="1"/>
</dbReference>
<dbReference type="Gene3D" id="1.10.290.10">
    <property type="entry name" value="Topoisomerase I, domain 4"/>
    <property type="match status" value="1"/>
</dbReference>
<dbReference type="HAMAP" id="MF_00952">
    <property type="entry name" value="Topoisom_1_prok"/>
    <property type="match status" value="1"/>
</dbReference>
<dbReference type="InterPro" id="IPR000380">
    <property type="entry name" value="Topo_IA"/>
</dbReference>
<dbReference type="InterPro" id="IPR003601">
    <property type="entry name" value="Topo_IA_2"/>
</dbReference>
<dbReference type="InterPro" id="IPR023406">
    <property type="entry name" value="Topo_IA_AS"/>
</dbReference>
<dbReference type="InterPro" id="IPR013497">
    <property type="entry name" value="Topo_IA_cen"/>
</dbReference>
<dbReference type="InterPro" id="IPR013824">
    <property type="entry name" value="Topo_IA_cen_sub1"/>
</dbReference>
<dbReference type="InterPro" id="IPR013825">
    <property type="entry name" value="Topo_IA_cen_sub2"/>
</dbReference>
<dbReference type="InterPro" id="IPR013826">
    <property type="entry name" value="Topo_IA_cen_sub3"/>
</dbReference>
<dbReference type="InterPro" id="IPR023405">
    <property type="entry name" value="Topo_IA_core_domain"/>
</dbReference>
<dbReference type="InterPro" id="IPR003602">
    <property type="entry name" value="Topo_IA_DNA-bd_dom"/>
</dbReference>
<dbReference type="InterPro" id="IPR013498">
    <property type="entry name" value="Topo_IA_Znf"/>
</dbReference>
<dbReference type="InterPro" id="IPR005733">
    <property type="entry name" value="TopoI_bac-type"/>
</dbReference>
<dbReference type="InterPro" id="IPR028612">
    <property type="entry name" value="Topoisom_1_IA"/>
</dbReference>
<dbReference type="InterPro" id="IPR006171">
    <property type="entry name" value="TOPRIM_dom"/>
</dbReference>
<dbReference type="InterPro" id="IPR034149">
    <property type="entry name" value="TOPRIM_TopoI"/>
</dbReference>
<dbReference type="NCBIfam" id="TIGR01051">
    <property type="entry name" value="topA_bact"/>
    <property type="match status" value="1"/>
</dbReference>
<dbReference type="PANTHER" id="PTHR42785:SF1">
    <property type="entry name" value="DNA TOPOISOMERASE"/>
    <property type="match status" value="1"/>
</dbReference>
<dbReference type="PANTHER" id="PTHR42785">
    <property type="entry name" value="DNA TOPOISOMERASE, TYPE IA, CORE"/>
    <property type="match status" value="1"/>
</dbReference>
<dbReference type="Pfam" id="PF01131">
    <property type="entry name" value="Topoisom_bac"/>
    <property type="match status" value="1"/>
</dbReference>
<dbReference type="Pfam" id="PF01751">
    <property type="entry name" value="Toprim"/>
    <property type="match status" value="1"/>
</dbReference>
<dbReference type="Pfam" id="PF01396">
    <property type="entry name" value="Zn_ribbon_Top1"/>
    <property type="match status" value="3"/>
</dbReference>
<dbReference type="PRINTS" id="PR00417">
    <property type="entry name" value="PRTPISMRASEI"/>
</dbReference>
<dbReference type="SMART" id="SM00437">
    <property type="entry name" value="TOP1Ac"/>
    <property type="match status" value="1"/>
</dbReference>
<dbReference type="SMART" id="SM00436">
    <property type="entry name" value="TOP1Bc"/>
    <property type="match status" value="1"/>
</dbReference>
<dbReference type="SMART" id="SM00493">
    <property type="entry name" value="TOPRIM"/>
    <property type="match status" value="1"/>
</dbReference>
<dbReference type="SUPFAM" id="SSF56712">
    <property type="entry name" value="Prokaryotic type I DNA topoisomerase"/>
    <property type="match status" value="1"/>
</dbReference>
<dbReference type="SUPFAM" id="SSF57783">
    <property type="entry name" value="Zinc beta-ribbon"/>
    <property type="match status" value="2"/>
</dbReference>
<dbReference type="PROSITE" id="PS00396">
    <property type="entry name" value="TOPO_IA_1"/>
    <property type="match status" value="1"/>
</dbReference>
<dbReference type="PROSITE" id="PS52039">
    <property type="entry name" value="TOPO_IA_2"/>
    <property type="match status" value="1"/>
</dbReference>
<dbReference type="PROSITE" id="PS50880">
    <property type="entry name" value="TOPRIM"/>
    <property type="match status" value="1"/>
</dbReference>
<name>TOP1_CAMJE</name>
<accession>Q9PLZ2</accession>
<accession>Q0P7U5</accession>